<reference key="1">
    <citation type="journal article" date="2009" name="PLoS Biol.">
        <title>Lineage-specific biology revealed by a finished genome assembly of the mouse.</title>
        <authorList>
            <person name="Church D.M."/>
            <person name="Goodstadt L."/>
            <person name="Hillier L.W."/>
            <person name="Zody M.C."/>
            <person name="Goldstein S."/>
            <person name="She X."/>
            <person name="Bult C.J."/>
            <person name="Agarwala R."/>
            <person name="Cherry J.L."/>
            <person name="DiCuccio M."/>
            <person name="Hlavina W."/>
            <person name="Kapustin Y."/>
            <person name="Meric P."/>
            <person name="Maglott D."/>
            <person name="Birtle Z."/>
            <person name="Marques A.C."/>
            <person name="Graves T."/>
            <person name="Zhou S."/>
            <person name="Teague B."/>
            <person name="Potamousis K."/>
            <person name="Churas C."/>
            <person name="Place M."/>
            <person name="Herschleb J."/>
            <person name="Runnheim R."/>
            <person name="Forrest D."/>
            <person name="Amos-Landgraf J."/>
            <person name="Schwartz D.C."/>
            <person name="Cheng Z."/>
            <person name="Lindblad-Toh K."/>
            <person name="Eichler E.E."/>
            <person name="Ponting C.P."/>
        </authorList>
    </citation>
    <scope>NUCLEOTIDE SEQUENCE [LARGE SCALE GENOMIC DNA]</scope>
    <source>
        <strain>C57BL/6J</strain>
    </source>
</reference>
<reference key="2">
    <citation type="journal article" date="2004" name="Genome Res.">
        <title>The status, quality, and expansion of the NIH full-length cDNA project: the Mammalian Gene Collection (MGC).</title>
        <authorList>
            <consortium name="The MGC Project Team"/>
        </authorList>
    </citation>
    <scope>NUCLEOTIDE SEQUENCE [LARGE SCALE MRNA] (ISOFORM 2)</scope>
    <scope>NUCLEOTIDE SEQUENCE [LARGE SCALE MRNA] OF 429-1054 (ISOFORM 1)</scope>
    <source>
        <strain>FVB/N-3</strain>
        <tissue>Embryonic germ cell</tissue>
        <tissue>Mammary gland</tissue>
        <tissue>Mammary tumor</tissue>
        <tissue>Placenta</tissue>
    </source>
</reference>
<reference key="3">
    <citation type="journal article" date="2005" name="Science">
        <title>The transcriptional landscape of the mammalian genome.</title>
        <authorList>
            <person name="Carninci P."/>
            <person name="Kasukawa T."/>
            <person name="Katayama S."/>
            <person name="Gough J."/>
            <person name="Frith M.C."/>
            <person name="Maeda N."/>
            <person name="Oyama R."/>
            <person name="Ravasi T."/>
            <person name="Lenhard B."/>
            <person name="Wells C."/>
            <person name="Kodzius R."/>
            <person name="Shimokawa K."/>
            <person name="Bajic V.B."/>
            <person name="Brenner S.E."/>
            <person name="Batalov S."/>
            <person name="Forrest A.R."/>
            <person name="Zavolan M."/>
            <person name="Davis M.J."/>
            <person name="Wilming L.G."/>
            <person name="Aidinis V."/>
            <person name="Allen J.E."/>
            <person name="Ambesi-Impiombato A."/>
            <person name="Apweiler R."/>
            <person name="Aturaliya R.N."/>
            <person name="Bailey T.L."/>
            <person name="Bansal M."/>
            <person name="Baxter L."/>
            <person name="Beisel K.W."/>
            <person name="Bersano T."/>
            <person name="Bono H."/>
            <person name="Chalk A.M."/>
            <person name="Chiu K.P."/>
            <person name="Choudhary V."/>
            <person name="Christoffels A."/>
            <person name="Clutterbuck D.R."/>
            <person name="Crowe M.L."/>
            <person name="Dalla E."/>
            <person name="Dalrymple B.P."/>
            <person name="de Bono B."/>
            <person name="Della Gatta G."/>
            <person name="di Bernardo D."/>
            <person name="Down T."/>
            <person name="Engstrom P."/>
            <person name="Fagiolini M."/>
            <person name="Faulkner G."/>
            <person name="Fletcher C.F."/>
            <person name="Fukushima T."/>
            <person name="Furuno M."/>
            <person name="Futaki S."/>
            <person name="Gariboldi M."/>
            <person name="Georgii-Hemming P."/>
            <person name="Gingeras T.R."/>
            <person name="Gojobori T."/>
            <person name="Green R.E."/>
            <person name="Gustincich S."/>
            <person name="Harbers M."/>
            <person name="Hayashi Y."/>
            <person name="Hensch T.K."/>
            <person name="Hirokawa N."/>
            <person name="Hill D."/>
            <person name="Huminiecki L."/>
            <person name="Iacono M."/>
            <person name="Ikeo K."/>
            <person name="Iwama A."/>
            <person name="Ishikawa T."/>
            <person name="Jakt M."/>
            <person name="Kanapin A."/>
            <person name="Katoh M."/>
            <person name="Kawasawa Y."/>
            <person name="Kelso J."/>
            <person name="Kitamura H."/>
            <person name="Kitano H."/>
            <person name="Kollias G."/>
            <person name="Krishnan S.P."/>
            <person name="Kruger A."/>
            <person name="Kummerfeld S.K."/>
            <person name="Kurochkin I.V."/>
            <person name="Lareau L.F."/>
            <person name="Lazarevic D."/>
            <person name="Lipovich L."/>
            <person name="Liu J."/>
            <person name="Liuni S."/>
            <person name="McWilliam S."/>
            <person name="Madan Babu M."/>
            <person name="Madera M."/>
            <person name="Marchionni L."/>
            <person name="Matsuda H."/>
            <person name="Matsuzawa S."/>
            <person name="Miki H."/>
            <person name="Mignone F."/>
            <person name="Miyake S."/>
            <person name="Morris K."/>
            <person name="Mottagui-Tabar S."/>
            <person name="Mulder N."/>
            <person name="Nakano N."/>
            <person name="Nakauchi H."/>
            <person name="Ng P."/>
            <person name="Nilsson R."/>
            <person name="Nishiguchi S."/>
            <person name="Nishikawa S."/>
            <person name="Nori F."/>
            <person name="Ohara O."/>
            <person name="Okazaki Y."/>
            <person name="Orlando V."/>
            <person name="Pang K.C."/>
            <person name="Pavan W.J."/>
            <person name="Pavesi G."/>
            <person name="Pesole G."/>
            <person name="Petrovsky N."/>
            <person name="Piazza S."/>
            <person name="Reed J."/>
            <person name="Reid J.F."/>
            <person name="Ring B.Z."/>
            <person name="Ringwald M."/>
            <person name="Rost B."/>
            <person name="Ruan Y."/>
            <person name="Salzberg S.L."/>
            <person name="Sandelin A."/>
            <person name="Schneider C."/>
            <person name="Schoenbach C."/>
            <person name="Sekiguchi K."/>
            <person name="Semple C.A."/>
            <person name="Seno S."/>
            <person name="Sessa L."/>
            <person name="Sheng Y."/>
            <person name="Shibata Y."/>
            <person name="Shimada H."/>
            <person name="Shimada K."/>
            <person name="Silva D."/>
            <person name="Sinclair B."/>
            <person name="Sperling S."/>
            <person name="Stupka E."/>
            <person name="Sugiura K."/>
            <person name="Sultana R."/>
            <person name="Takenaka Y."/>
            <person name="Taki K."/>
            <person name="Tammoja K."/>
            <person name="Tan S.L."/>
            <person name="Tang S."/>
            <person name="Taylor M.S."/>
            <person name="Tegner J."/>
            <person name="Teichmann S.A."/>
            <person name="Ueda H.R."/>
            <person name="van Nimwegen E."/>
            <person name="Verardo R."/>
            <person name="Wei C.L."/>
            <person name="Yagi K."/>
            <person name="Yamanishi H."/>
            <person name="Zabarovsky E."/>
            <person name="Zhu S."/>
            <person name="Zimmer A."/>
            <person name="Hide W."/>
            <person name="Bult C."/>
            <person name="Grimmond S.M."/>
            <person name="Teasdale R.D."/>
            <person name="Liu E.T."/>
            <person name="Brusic V."/>
            <person name="Quackenbush J."/>
            <person name="Wahlestedt C."/>
            <person name="Mattick J.S."/>
            <person name="Hume D.A."/>
            <person name="Kai C."/>
            <person name="Sasaki D."/>
            <person name="Tomaru Y."/>
            <person name="Fukuda S."/>
            <person name="Kanamori-Katayama M."/>
            <person name="Suzuki M."/>
            <person name="Aoki J."/>
            <person name="Arakawa T."/>
            <person name="Iida J."/>
            <person name="Imamura K."/>
            <person name="Itoh M."/>
            <person name="Kato T."/>
            <person name="Kawaji H."/>
            <person name="Kawagashira N."/>
            <person name="Kawashima T."/>
            <person name="Kojima M."/>
            <person name="Kondo S."/>
            <person name="Konno H."/>
            <person name="Nakano K."/>
            <person name="Ninomiya N."/>
            <person name="Nishio T."/>
            <person name="Okada M."/>
            <person name="Plessy C."/>
            <person name="Shibata K."/>
            <person name="Shiraki T."/>
            <person name="Suzuki S."/>
            <person name="Tagami M."/>
            <person name="Waki K."/>
            <person name="Watahiki A."/>
            <person name="Okamura-Oho Y."/>
            <person name="Suzuki H."/>
            <person name="Kawai J."/>
            <person name="Hayashizaki Y."/>
        </authorList>
    </citation>
    <scope>NUCLEOTIDE SEQUENCE [LARGE SCALE MRNA] OF 1-260 AND 853-1054 (ISOFORM 1)</scope>
    <source>
        <strain>C57BL/6J</strain>
        <tissue>Corpus striatum</tissue>
        <tissue>Liver</tissue>
    </source>
</reference>
<reference key="4">
    <citation type="journal article" date="2005" name="Mol. Cell. Biol.">
        <title>BRCTx is a novel, highly conserved RAD18-interacting protein.</title>
        <authorList>
            <person name="Adams D.J."/>
            <person name="van der Weyden L."/>
            <person name="Gergely F.V."/>
            <person name="Arends M.J."/>
            <person name="Ng B.L."/>
            <person name="Tannahill D."/>
            <person name="Kanaar R."/>
            <person name="Markus A."/>
            <person name="Morris B.J."/>
            <person name="Bradley A."/>
        </authorList>
    </citation>
    <scope>SUBCELLULAR LOCATION</scope>
    <scope>TISSUE SPECIFICITY</scope>
    <scope>DEVELOPMENTAL STAGE</scope>
    <scope>DISRUPTION PHENOTYPE</scope>
</reference>
<reference key="5">
    <citation type="journal article" date="2012" name="DNA Repair">
        <title>RAD18-BRCTx interaction is required for efficient repair of UV-induced DNA damage.</title>
        <authorList>
            <person name="Liu T."/>
            <person name="Chen H."/>
            <person name="Kim H."/>
            <person name="Huen M.S."/>
            <person name="Chen J."/>
            <person name="Huang J."/>
        </authorList>
    </citation>
    <scope>INTERACTION WITH RAD18</scope>
    <scope>SUBCELLULAR LOCATION</scope>
    <scope>DOMAIN</scope>
</reference>
<gene>
    <name evidence="8" type="primary">Slf1</name>
    <name type="synonym">Ankrd32</name>
    <name type="synonym">Brctd1</name>
    <name evidence="6" type="synonym">Brctx</name>
</gene>
<keyword id="KW-0025">Alternative splicing</keyword>
<keyword id="KW-0040">ANK repeat</keyword>
<keyword id="KW-0963">Cytoplasm</keyword>
<keyword id="KW-0206">Cytoskeleton</keyword>
<keyword id="KW-0227">DNA damage</keyword>
<keyword id="KW-0234">DNA repair</keyword>
<keyword id="KW-0539">Nucleus</keyword>
<keyword id="KW-1185">Reference proteome</keyword>
<keyword id="KW-0677">Repeat</keyword>
<sequence length="1054" mass="121004">MEDSATKHIIQMTGFKMEEKEALVKLLLKLDCTFIKSEKYKNCTHLIAERLCKSEKFLAACAAGKWVLTKDYIIHSAKSGRWLDETTYEWGYKIEKDSHYSPQMQSAPKRWREELKRTGAPGAFHRWKVVLLVRADKRSDSLVRVLEAGKANVILPKNSPSGITHVIASNARISAEREQENFKAPFYPIQYLGDFLLEKEIQNDEHSQISPAWTKYNNQEKGNDVGFPEMKGAGENMYRTQNKMENHNKNVSDRFVLSEHHKKKFKDFRKDIRSVKKRNTLRRHGLENQKETKKKDKNIQRSYILRKKNKKEGYCKTDDAHDTIRSMLKKRGHYREQKEMKNPLLTDGTKESKTKDVKTNMNLIEIKNALKKQIYKDIYRAQAVRYNCIRVDKQPVYNVEVKNSEFPRGILNLIENLIEGQFFKEAIEELSSLQAHYIPPVCLLHAILENVLQDKIDTFSGRYFHILSALLHLHPPWKSPAMLKYYLELFQCPTCMKGAWDFTEVLIRSCLFNEDFCHQISENISTKVVNLTLLKFFFNLLEGEVRHLSQKLCDWSDSQSLKVTEKAILHEIFWSGSETSGLLTKPVNMLLEWTIYSHKEKCKSNDVFKHELSYLLTGILGAAVDYWIFLGIQMGRNVIRHMSDDLGSYISLSCDDFSSKELEIFICSFSSSWLQMFVAEAIFKKLCLQGPTSTCTEPLSLQKIIDSYLPILGKMDIHGAGKMQSPKKLCQRPCLESQRALLMLNGAKRKQAEGRPELLELNRAKCSSSLKKLKKKSEELSCSKENCPSLVTKMNFHKTNLKGETALHRVCIKNQVEKLIILLSLPGIDINVKDNAGWTPLHEACNYGNTECVQEILQRCPEVDLLTQVDGVTPLHDALSNGHVEIGKLLLQRGGPELLQQRNSKGELPLDYVLSPKDKEELFAITNIDDTVDNFHAKTQKHFYHQQLEFGSFLLSRMLINFCSIFDLSSEFILAFKGLGHLNELLMACNSDTEASNAHTDWLLDVYARNIKTLKKLPSVLKELPENLNVCPGVHTEALLVTLKMMCQSITELS</sequence>
<evidence type="ECO:0000250" key="1">
    <source>
        <dbReference type="UniProtKB" id="Q9BQI6"/>
    </source>
</evidence>
<evidence type="ECO:0000256" key="2">
    <source>
        <dbReference type="SAM" id="MobiDB-lite"/>
    </source>
</evidence>
<evidence type="ECO:0000269" key="3">
    <source>
    </source>
</evidence>
<evidence type="ECO:0000269" key="4">
    <source>
    </source>
</evidence>
<evidence type="ECO:0000303" key="5">
    <source>
    </source>
</evidence>
<evidence type="ECO:0000303" key="6">
    <source>
    </source>
</evidence>
<evidence type="ECO:0000305" key="7"/>
<evidence type="ECO:0000312" key="8">
    <source>
        <dbReference type="MGI" id="MGI:2145448"/>
    </source>
</evidence>
<feature type="chain" id="PRO_0000243907" description="SMC5-SMC6 complex localization factor protein 1">
    <location>
        <begin position="1"/>
        <end position="1054"/>
    </location>
</feature>
<feature type="domain" description="BRCT 1">
    <location>
        <begin position="2"/>
        <end position="80"/>
    </location>
</feature>
<feature type="domain" description="BRCT 2">
    <location>
        <begin position="121"/>
        <end position="199"/>
    </location>
</feature>
<feature type="repeat" description="ANK 1">
    <location>
        <begin position="802"/>
        <end position="832"/>
    </location>
</feature>
<feature type="repeat" description="ANK 2">
    <location>
        <begin position="836"/>
        <end position="865"/>
    </location>
</feature>
<feature type="repeat" description="ANK 3">
    <location>
        <begin position="870"/>
        <end position="900"/>
    </location>
</feature>
<feature type="region of interest" description="Disordered" evidence="2">
    <location>
        <begin position="283"/>
        <end position="303"/>
    </location>
</feature>
<feature type="region of interest" description="NSE5-like domain; mediates interaction with SLF2" evidence="1">
    <location>
        <begin position="407"/>
        <end position="1054"/>
    </location>
</feature>
<feature type="compositionally biased region" description="Basic and acidic residues" evidence="2">
    <location>
        <begin position="284"/>
        <end position="299"/>
    </location>
</feature>
<feature type="splice variant" id="VSP_034415" description="In isoform 2." evidence="5">
    <original>NKMENHNKN</original>
    <variation>VKFCELEIL</variation>
    <location>
        <begin position="242"/>
        <end position="250"/>
    </location>
</feature>
<feature type="splice variant" id="VSP_034416" description="In isoform 2." evidence="5">
    <location>
        <begin position="251"/>
        <end position="1054"/>
    </location>
</feature>
<feature type="sequence conflict" description="In Ref. 2; AAH09101/AAH24900." evidence="7" ref="2">
    <original>I</original>
    <variation>V</variation>
    <location>
        <position position="711"/>
    </location>
</feature>
<organism>
    <name type="scientific">Mus musculus</name>
    <name type="common">Mouse</name>
    <dbReference type="NCBI Taxonomy" id="10090"/>
    <lineage>
        <taxon>Eukaryota</taxon>
        <taxon>Metazoa</taxon>
        <taxon>Chordata</taxon>
        <taxon>Craniata</taxon>
        <taxon>Vertebrata</taxon>
        <taxon>Euteleostomi</taxon>
        <taxon>Mammalia</taxon>
        <taxon>Eutheria</taxon>
        <taxon>Euarchontoglires</taxon>
        <taxon>Glires</taxon>
        <taxon>Rodentia</taxon>
        <taxon>Myomorpha</taxon>
        <taxon>Muroidea</taxon>
        <taxon>Muridae</taxon>
        <taxon>Murinae</taxon>
        <taxon>Mus</taxon>
        <taxon>Mus</taxon>
    </lineage>
</organism>
<name>SLF1_MOUSE</name>
<dbReference type="EMBL" id="AC122418">
    <property type="status" value="NOT_ANNOTATED_CDS"/>
    <property type="molecule type" value="Genomic_DNA"/>
</dbReference>
<dbReference type="EMBL" id="AC161266">
    <property type="status" value="NOT_ANNOTATED_CDS"/>
    <property type="molecule type" value="Genomic_DNA"/>
</dbReference>
<dbReference type="EMBL" id="BC009101">
    <property type="protein sequence ID" value="AAH09101.1"/>
    <property type="status" value="ALT_INIT"/>
    <property type="molecule type" value="mRNA"/>
</dbReference>
<dbReference type="EMBL" id="BC024900">
    <property type="protein sequence ID" value="AAH24900.1"/>
    <property type="status" value="ALT_INIT"/>
    <property type="molecule type" value="mRNA"/>
</dbReference>
<dbReference type="EMBL" id="BC083095">
    <property type="protein sequence ID" value="AAH83095.1"/>
    <property type="status" value="ALT_INIT"/>
    <property type="molecule type" value="mRNA"/>
</dbReference>
<dbReference type="EMBL" id="BC100362">
    <property type="protein sequence ID" value="AAI00363.1"/>
    <property type="molecule type" value="mRNA"/>
</dbReference>
<dbReference type="EMBL" id="AK047775">
    <property type="protein sequence ID" value="BAC33152.1"/>
    <property type="molecule type" value="mRNA"/>
</dbReference>
<dbReference type="EMBL" id="AK050168">
    <property type="protein sequence ID" value="BAC34106.1"/>
    <property type="molecule type" value="mRNA"/>
</dbReference>
<dbReference type="CCDS" id="CCDS26657.2">
    <molecule id="Q8R3P9-1"/>
</dbReference>
<dbReference type="RefSeq" id="NP_598832.3">
    <molecule id="Q8R3P9-1"/>
    <property type="nucleotide sequence ID" value="NM_134071.3"/>
</dbReference>
<dbReference type="RefSeq" id="XP_017170840.1">
    <molecule id="Q8R3P9-1"/>
    <property type="nucleotide sequence ID" value="XM_017315351.3"/>
</dbReference>
<dbReference type="RefSeq" id="XP_036013712.1">
    <molecule id="Q8R3P9-1"/>
    <property type="nucleotide sequence ID" value="XM_036157819.1"/>
</dbReference>
<dbReference type="SMR" id="Q8R3P9"/>
<dbReference type="BioGRID" id="222830">
    <property type="interactions" value="4"/>
</dbReference>
<dbReference type="FunCoup" id="Q8R3P9">
    <property type="interactions" value="2603"/>
</dbReference>
<dbReference type="IntAct" id="Q8R3P9">
    <property type="interactions" value="3"/>
</dbReference>
<dbReference type="STRING" id="10090.ENSMUSP00000118312"/>
<dbReference type="iPTMnet" id="Q8R3P9"/>
<dbReference type="PhosphoSitePlus" id="Q8R3P9"/>
<dbReference type="PaxDb" id="10090-ENSMUSP00000118312"/>
<dbReference type="ProteomicsDB" id="261076">
    <molecule id="Q8R3P9-1"/>
</dbReference>
<dbReference type="ProteomicsDB" id="261077">
    <molecule id="Q8R3P9-2"/>
</dbReference>
<dbReference type="Antibodypedia" id="24952">
    <property type="antibodies" value="133 antibodies from 19 providers"/>
</dbReference>
<dbReference type="DNASU" id="105377"/>
<dbReference type="Ensembl" id="ENSMUST00000151524.9">
    <molecule id="Q8R3P9-1"/>
    <property type="protein sequence ID" value="ENSMUSP00000118312.3"/>
    <property type="gene ID" value="ENSMUSG00000021597.17"/>
</dbReference>
<dbReference type="GeneID" id="105377"/>
<dbReference type="KEGG" id="mmu:105377"/>
<dbReference type="UCSC" id="uc007rgs.2">
    <molecule id="Q8R3P9-1"/>
    <property type="organism name" value="mouse"/>
</dbReference>
<dbReference type="UCSC" id="uc007rgv.2">
    <molecule id="Q8R3P9-2"/>
    <property type="organism name" value="mouse"/>
</dbReference>
<dbReference type="AGR" id="MGI:2145448"/>
<dbReference type="CTD" id="84250"/>
<dbReference type="MGI" id="MGI:2145448">
    <property type="gene designation" value="Slf1"/>
</dbReference>
<dbReference type="VEuPathDB" id="HostDB:ENSMUSG00000021597"/>
<dbReference type="eggNOG" id="KOG0504">
    <property type="taxonomic scope" value="Eukaryota"/>
</dbReference>
<dbReference type="eggNOG" id="KOG1929">
    <property type="taxonomic scope" value="Eukaryota"/>
</dbReference>
<dbReference type="GeneTree" id="ENSGT00940000158953"/>
<dbReference type="HOGENOM" id="CLU_010529_0_0_1"/>
<dbReference type="InParanoid" id="Q8R3P9"/>
<dbReference type="OMA" id="YIGHYLF"/>
<dbReference type="OrthoDB" id="273147at2759"/>
<dbReference type="PhylomeDB" id="Q8R3P9"/>
<dbReference type="TreeFam" id="TF329705"/>
<dbReference type="BioGRID-ORCS" id="105377">
    <property type="hits" value="7 hits in 81 CRISPR screens"/>
</dbReference>
<dbReference type="CD-CODE" id="01CA17F3">
    <property type="entry name" value="Centrosome"/>
</dbReference>
<dbReference type="PRO" id="PR:Q8R3P9"/>
<dbReference type="Proteomes" id="UP000000589">
    <property type="component" value="Chromosome 13"/>
</dbReference>
<dbReference type="RNAct" id="Q8R3P9">
    <property type="molecule type" value="protein"/>
</dbReference>
<dbReference type="Bgee" id="ENSMUSG00000021597">
    <property type="expression patterns" value="Expressed in spermatocyte and 254 other cell types or tissues"/>
</dbReference>
<dbReference type="ExpressionAtlas" id="Q8R3P9">
    <property type="expression patterns" value="baseline and differential"/>
</dbReference>
<dbReference type="GO" id="GO:0005813">
    <property type="term" value="C:centrosome"/>
    <property type="evidence" value="ECO:0000314"/>
    <property type="project" value="MGI"/>
</dbReference>
<dbReference type="GO" id="GO:0005737">
    <property type="term" value="C:cytoplasm"/>
    <property type="evidence" value="ECO:0000314"/>
    <property type="project" value="UniProtKB"/>
</dbReference>
<dbReference type="GO" id="GO:0042405">
    <property type="term" value="C:nuclear inclusion body"/>
    <property type="evidence" value="ECO:0000314"/>
    <property type="project" value="UniProtKB"/>
</dbReference>
<dbReference type="GO" id="GO:0005654">
    <property type="term" value="C:nucleoplasm"/>
    <property type="evidence" value="ECO:0007669"/>
    <property type="project" value="Ensembl"/>
</dbReference>
<dbReference type="GO" id="GO:0000786">
    <property type="term" value="C:nucleosome"/>
    <property type="evidence" value="ECO:0000314"/>
    <property type="project" value="UniProtKB"/>
</dbReference>
<dbReference type="GO" id="GO:0005634">
    <property type="term" value="C:nucleus"/>
    <property type="evidence" value="ECO:0000314"/>
    <property type="project" value="UniProtKB"/>
</dbReference>
<dbReference type="GO" id="GO:0035861">
    <property type="term" value="C:site of double-strand break"/>
    <property type="evidence" value="ECO:0000250"/>
    <property type="project" value="UniProtKB"/>
</dbReference>
<dbReference type="GO" id="GO:0044877">
    <property type="term" value="F:protein-containing complex binding"/>
    <property type="evidence" value="ECO:0007669"/>
    <property type="project" value="Ensembl"/>
</dbReference>
<dbReference type="GO" id="GO:0031625">
    <property type="term" value="F:ubiquitin protein ligase binding"/>
    <property type="evidence" value="ECO:0000353"/>
    <property type="project" value="UniProtKB"/>
</dbReference>
<dbReference type="GO" id="GO:0006974">
    <property type="term" value="P:DNA damage response"/>
    <property type="evidence" value="ECO:0000314"/>
    <property type="project" value="UniProtKB"/>
</dbReference>
<dbReference type="GO" id="GO:0006281">
    <property type="term" value="P:DNA repair"/>
    <property type="evidence" value="ECO:0007669"/>
    <property type="project" value="UniProtKB-KW"/>
</dbReference>
<dbReference type="GO" id="GO:2000781">
    <property type="term" value="P:positive regulation of double-strand break repair"/>
    <property type="evidence" value="ECO:0000250"/>
    <property type="project" value="UniProtKB"/>
</dbReference>
<dbReference type="GO" id="GO:0034184">
    <property type="term" value="P:positive regulation of maintenance of mitotic sister chromatid cohesion"/>
    <property type="evidence" value="ECO:0000250"/>
    <property type="project" value="UniProtKB"/>
</dbReference>
<dbReference type="GO" id="GO:0031334">
    <property type="term" value="P:positive regulation of protein-containing complex assembly"/>
    <property type="evidence" value="ECO:0000250"/>
    <property type="project" value="UniProtKB"/>
</dbReference>
<dbReference type="GO" id="GO:1990166">
    <property type="term" value="P:protein localization to site of double-strand break"/>
    <property type="evidence" value="ECO:0000250"/>
    <property type="project" value="UniProtKB"/>
</dbReference>
<dbReference type="CDD" id="cd17750">
    <property type="entry name" value="BRCT_SLF1"/>
    <property type="match status" value="1"/>
</dbReference>
<dbReference type="FunFam" id="1.25.40.20:FF:000121">
    <property type="entry name" value="SMC5-SMC6 complex localization factor protein 1"/>
    <property type="match status" value="1"/>
</dbReference>
<dbReference type="FunFam" id="3.40.50.10190:FF:000034">
    <property type="entry name" value="SMC5-SMC6 complex localization factor protein 1"/>
    <property type="match status" value="1"/>
</dbReference>
<dbReference type="Gene3D" id="1.25.40.20">
    <property type="entry name" value="Ankyrin repeat-containing domain"/>
    <property type="match status" value="1"/>
</dbReference>
<dbReference type="Gene3D" id="3.40.50.10190">
    <property type="entry name" value="BRCT domain"/>
    <property type="match status" value="2"/>
</dbReference>
<dbReference type="InterPro" id="IPR002110">
    <property type="entry name" value="Ankyrin_rpt"/>
</dbReference>
<dbReference type="InterPro" id="IPR036770">
    <property type="entry name" value="Ankyrin_rpt-contain_sf"/>
</dbReference>
<dbReference type="InterPro" id="IPR001357">
    <property type="entry name" value="BRCT_dom"/>
</dbReference>
<dbReference type="InterPro" id="IPR036420">
    <property type="entry name" value="BRCT_dom_sf"/>
</dbReference>
<dbReference type="InterPro" id="IPR049935">
    <property type="entry name" value="BRCT_SLF1"/>
</dbReference>
<dbReference type="InterPro" id="IPR042479">
    <property type="entry name" value="Slf1"/>
</dbReference>
<dbReference type="PANTHER" id="PTHR46677">
    <property type="entry name" value="SMC5-SMC6 COMPLEX LOCALIZATION FACTOR PROTEIN 1"/>
    <property type="match status" value="1"/>
</dbReference>
<dbReference type="PANTHER" id="PTHR46677:SF1">
    <property type="entry name" value="SMC5-SMC6 COMPLEX LOCALIZATION FACTOR PROTEIN 1"/>
    <property type="match status" value="1"/>
</dbReference>
<dbReference type="Pfam" id="PF12796">
    <property type="entry name" value="Ank_2"/>
    <property type="match status" value="1"/>
</dbReference>
<dbReference type="Pfam" id="PF23294">
    <property type="entry name" value="BRCT_TopB1_SLF1"/>
    <property type="match status" value="1"/>
</dbReference>
<dbReference type="Pfam" id="PF16770">
    <property type="entry name" value="RTT107_BRCT_5"/>
    <property type="match status" value="1"/>
</dbReference>
<dbReference type="SMART" id="SM00248">
    <property type="entry name" value="ANK"/>
    <property type="match status" value="3"/>
</dbReference>
<dbReference type="SMART" id="SM00292">
    <property type="entry name" value="BRCT"/>
    <property type="match status" value="2"/>
</dbReference>
<dbReference type="SUPFAM" id="SSF48403">
    <property type="entry name" value="Ankyrin repeat"/>
    <property type="match status" value="1"/>
</dbReference>
<dbReference type="SUPFAM" id="SSF52113">
    <property type="entry name" value="BRCT domain"/>
    <property type="match status" value="1"/>
</dbReference>
<dbReference type="PROSITE" id="PS50297">
    <property type="entry name" value="ANK_REP_REGION"/>
    <property type="match status" value="1"/>
</dbReference>
<dbReference type="PROSITE" id="PS50088">
    <property type="entry name" value="ANK_REPEAT"/>
    <property type="match status" value="3"/>
</dbReference>
<accession>Q8R3P9</accession>
<accession>Q497V2</accession>
<accession>Q5XK30</accession>
<accession>Q8BHY5</accession>
<accession>Q8BQM6</accession>
<accession>Q921Y9</accession>
<proteinExistence type="evidence at protein level"/>
<protein>
    <recommendedName>
        <fullName evidence="8">SMC5-SMC6 complex localization factor protein 1</fullName>
    </recommendedName>
    <alternativeName>
        <fullName>Ankyrin repeat domain-containing protein 32</fullName>
    </alternativeName>
    <alternativeName>
        <fullName>BRCT domain-containing protein 1</fullName>
    </alternativeName>
    <alternativeName>
        <fullName evidence="6">Protein BRCTx</fullName>
    </alternativeName>
</protein>
<comment type="function">
    <text evidence="1">Plays a role in the DNA damage response (DDR) pathway by regulating postreplication repair of UV-damaged DNA and genomic stability maintenance. The SLF1-SLF2 complex acts to link RAD18 with the SMC5-SMC6 complex at replication-coupled interstrand cross-links (ICL) and DNA double-strand breaks (DSBs) sites on chromatin during DNA repair in response to stalled replication forks. Promotes the recruitment of SLF2 and the SMC5-SMC6 complex to DNA lesions.</text>
</comment>
<comment type="subunit">
    <text evidence="1 3 4">Interacts (via BRCT domains) with RAD18 (via C-terminus and phosphorylated form); this interaction is required for efficient repair of UV-induced DNA damage (PubMed:15632077, PubMed:22036607). Interacts (via N-terminus) with SLF2; this interaction links RAD18 to the SMC5-SMC6 complex. Interacts (via BRCT domains) with RAD18; this interaction occurs in a SLF2-independent manner. Interacts with SMC6.</text>
</comment>
<comment type="subcellular location">
    <subcellularLocation>
        <location evidence="3 4">Nucleus</location>
    </subcellularLocation>
    <subcellularLocation>
        <location evidence="3">Cytoplasm</location>
    </subcellularLocation>
    <subcellularLocation>
        <location evidence="3">Cytoplasm</location>
        <location evidence="3">Cytoskeleton</location>
        <location evidence="3">Microtubule organizing center</location>
        <location evidence="3">Centrosome</location>
    </subcellularLocation>
    <text evidence="1 3 4">Relocalizes with RAD18 to nuclear foci in response to DNA damage (PubMed:22036607). Colocalizes with RAD18 in the nucleus and to centrosomes (PubMed:15632077). Associates with chromatin. Accumulates with RAD18 and the SMC5-SMC6 complex at replication-coupled DNA interstrand repair and DNA double-strand breaks (DSBs) sites on chromatin in a ubiquitin-dependent manner.</text>
</comment>
<comment type="alternative products">
    <event type="alternative splicing"/>
    <isoform>
        <id>Q8R3P9-1</id>
        <name>1</name>
        <sequence type="displayed"/>
    </isoform>
    <isoform>
        <id>Q8R3P9-2</id>
        <name>2</name>
        <sequence type="described" ref="VSP_034415 VSP_034416"/>
    </isoform>
</comment>
<comment type="tissue specificity">
    <text evidence="3">Widely expressed (PubMed:15632077). Expressed in testis (PubMed:15632077). Expressed in spermatocytes (PubMed:15632077).</text>
</comment>
<comment type="developmental stage">
    <text evidence="3">Expressed in the developing embryo (PubMed:15632077).</text>
</comment>
<comment type="domain">
    <text evidence="4">BRCT domains are necessary for its targeting to ionizing radiation-induced nuclear foci (PubMed:22036607).</text>
</comment>
<comment type="disruption phenotype">
    <text evidence="3">Mice develop normally, display no pathological abnormalities and are fertile (PubMed:15632077).</text>
</comment>
<comment type="sequence caution" evidence="7">
    <conflict type="erroneous initiation">
        <sequence resource="EMBL-CDS" id="AAH09101"/>
    </conflict>
</comment>
<comment type="sequence caution" evidence="7">
    <conflict type="erroneous initiation">
        <sequence resource="EMBL-CDS" id="AAH24900"/>
    </conflict>
</comment>
<comment type="sequence caution" evidence="7">
    <conflict type="erroneous initiation">
        <sequence resource="EMBL-CDS" id="AAH83095"/>
    </conflict>
</comment>